<keyword id="KW-0066">ATP synthesis</keyword>
<keyword id="KW-0997">Cell inner membrane</keyword>
<keyword id="KW-1003">Cell membrane</keyword>
<keyword id="KW-0138">CF(0)</keyword>
<keyword id="KW-0375">Hydrogen ion transport</keyword>
<keyword id="KW-0406">Ion transport</keyword>
<keyword id="KW-0472">Membrane</keyword>
<keyword id="KW-1185">Reference proteome</keyword>
<keyword id="KW-0812">Transmembrane</keyword>
<keyword id="KW-1133">Transmembrane helix</keyword>
<keyword id="KW-0813">Transport</keyword>
<sequence>MSANPLDQFKISTIFKLPSIGGYNIDFTNASLFMVLSTLIISLFCYIGLRKENILPNSMQLIIEAIYNFIVSTIESNVGRKGLQYIPLVFTIFTFIATCNLLGVLPLGFTVTSHIAVTFAISMVVFISVTAIGFKHQGIHFLRILLPKGTPGWLAPMMVFIELFAYCARPVSLSIRLAANMIAGHTIIKVIAGFVIKMNIFLTPLPMAFIIILIGFEIFVAILQAYIFTVLTCVYLSDAINEH</sequence>
<accession>Q2GFB2</accession>
<evidence type="ECO:0000255" key="1">
    <source>
        <dbReference type="HAMAP-Rule" id="MF_01393"/>
    </source>
</evidence>
<name>ATP6_EHRCR</name>
<reference key="1">
    <citation type="journal article" date="2006" name="PLoS Genet.">
        <title>Comparative genomics of emerging human ehrlichiosis agents.</title>
        <authorList>
            <person name="Dunning Hotopp J.C."/>
            <person name="Lin M."/>
            <person name="Madupu R."/>
            <person name="Crabtree J."/>
            <person name="Angiuoli S.V."/>
            <person name="Eisen J.A."/>
            <person name="Seshadri R."/>
            <person name="Ren Q."/>
            <person name="Wu M."/>
            <person name="Utterback T.R."/>
            <person name="Smith S."/>
            <person name="Lewis M."/>
            <person name="Khouri H."/>
            <person name="Zhang C."/>
            <person name="Niu H."/>
            <person name="Lin Q."/>
            <person name="Ohashi N."/>
            <person name="Zhi N."/>
            <person name="Nelson W.C."/>
            <person name="Brinkac L.M."/>
            <person name="Dodson R.J."/>
            <person name="Rosovitz M.J."/>
            <person name="Sundaram J.P."/>
            <person name="Daugherty S.C."/>
            <person name="Davidsen T."/>
            <person name="Durkin A.S."/>
            <person name="Gwinn M.L."/>
            <person name="Haft D.H."/>
            <person name="Selengut J.D."/>
            <person name="Sullivan S.A."/>
            <person name="Zafar N."/>
            <person name="Zhou L."/>
            <person name="Benahmed F."/>
            <person name="Forberger H."/>
            <person name="Halpin R."/>
            <person name="Mulligan S."/>
            <person name="Robinson J."/>
            <person name="White O."/>
            <person name="Rikihisa Y."/>
            <person name="Tettelin H."/>
        </authorList>
    </citation>
    <scope>NUCLEOTIDE SEQUENCE [LARGE SCALE GENOMIC DNA]</scope>
    <source>
        <strain>ATCC CRL-10679 / Arkansas</strain>
    </source>
</reference>
<organism>
    <name type="scientific">Ehrlichia chaffeensis (strain ATCC CRL-10679 / Arkansas)</name>
    <dbReference type="NCBI Taxonomy" id="205920"/>
    <lineage>
        <taxon>Bacteria</taxon>
        <taxon>Pseudomonadati</taxon>
        <taxon>Pseudomonadota</taxon>
        <taxon>Alphaproteobacteria</taxon>
        <taxon>Rickettsiales</taxon>
        <taxon>Anaplasmataceae</taxon>
        <taxon>Ehrlichia</taxon>
    </lineage>
</organism>
<protein>
    <recommendedName>
        <fullName evidence="1">ATP synthase subunit a</fullName>
    </recommendedName>
    <alternativeName>
        <fullName evidence="1">ATP synthase F0 sector subunit a</fullName>
    </alternativeName>
    <alternativeName>
        <fullName evidence="1">F-ATPase subunit 6</fullName>
    </alternativeName>
</protein>
<proteinExistence type="inferred from homology"/>
<comment type="function">
    <text evidence="1">Key component of the proton channel; it plays a direct role in the translocation of protons across the membrane.</text>
</comment>
<comment type="subunit">
    <text evidence="1">F-type ATPases have 2 components, CF(1) - the catalytic core - and CF(0) - the membrane proton channel. CF(1) has five subunits: alpha(3), beta(3), gamma(1), delta(1), epsilon(1). CF(0) has three main subunits: a(1), b(2) and c(9-12). The alpha and beta chains form an alternating ring which encloses part of the gamma chain. CF(1) is attached to CF(0) by a central stalk formed by the gamma and epsilon chains, while a peripheral stalk is formed by the delta and b chains.</text>
</comment>
<comment type="subcellular location">
    <subcellularLocation>
        <location evidence="1">Cell inner membrane</location>
        <topology evidence="1">Multi-pass membrane protein</topology>
    </subcellularLocation>
</comment>
<comment type="similarity">
    <text evidence="1">Belongs to the ATPase A chain family.</text>
</comment>
<dbReference type="EMBL" id="CP000236">
    <property type="protein sequence ID" value="ABD45092.1"/>
    <property type="molecule type" value="Genomic_DNA"/>
</dbReference>
<dbReference type="RefSeq" id="WP_006011616.1">
    <property type="nucleotide sequence ID" value="NC_007799.1"/>
</dbReference>
<dbReference type="SMR" id="Q2GFB2"/>
<dbReference type="STRING" id="205920.ECH_1086"/>
<dbReference type="KEGG" id="ech:ECH_1086"/>
<dbReference type="eggNOG" id="COG0356">
    <property type="taxonomic scope" value="Bacteria"/>
</dbReference>
<dbReference type="HOGENOM" id="CLU_041018_0_2_5"/>
<dbReference type="OrthoDB" id="9809130at2"/>
<dbReference type="Proteomes" id="UP000008320">
    <property type="component" value="Chromosome"/>
</dbReference>
<dbReference type="GO" id="GO:0005886">
    <property type="term" value="C:plasma membrane"/>
    <property type="evidence" value="ECO:0007669"/>
    <property type="project" value="UniProtKB-SubCell"/>
</dbReference>
<dbReference type="GO" id="GO:0045259">
    <property type="term" value="C:proton-transporting ATP synthase complex"/>
    <property type="evidence" value="ECO:0007669"/>
    <property type="project" value="UniProtKB-KW"/>
</dbReference>
<dbReference type="GO" id="GO:0046933">
    <property type="term" value="F:proton-transporting ATP synthase activity, rotational mechanism"/>
    <property type="evidence" value="ECO:0007669"/>
    <property type="project" value="UniProtKB-UniRule"/>
</dbReference>
<dbReference type="CDD" id="cd00310">
    <property type="entry name" value="ATP-synt_Fo_a_6"/>
    <property type="match status" value="1"/>
</dbReference>
<dbReference type="Gene3D" id="1.20.120.220">
    <property type="entry name" value="ATP synthase, F0 complex, subunit A"/>
    <property type="match status" value="1"/>
</dbReference>
<dbReference type="HAMAP" id="MF_01393">
    <property type="entry name" value="ATP_synth_a_bact"/>
    <property type="match status" value="1"/>
</dbReference>
<dbReference type="InterPro" id="IPR000568">
    <property type="entry name" value="ATP_synth_F0_asu"/>
</dbReference>
<dbReference type="InterPro" id="IPR023011">
    <property type="entry name" value="ATP_synth_F0_asu_AS"/>
</dbReference>
<dbReference type="InterPro" id="IPR045083">
    <property type="entry name" value="ATP_synth_F0_asu_bact/mt"/>
</dbReference>
<dbReference type="InterPro" id="IPR035908">
    <property type="entry name" value="F0_ATP_A_sf"/>
</dbReference>
<dbReference type="NCBIfam" id="TIGR01131">
    <property type="entry name" value="ATP_synt_6_or_A"/>
    <property type="match status" value="1"/>
</dbReference>
<dbReference type="NCBIfam" id="NF004482">
    <property type="entry name" value="PRK05815.2-4"/>
    <property type="match status" value="1"/>
</dbReference>
<dbReference type="PANTHER" id="PTHR11410">
    <property type="entry name" value="ATP SYNTHASE SUBUNIT A"/>
    <property type="match status" value="1"/>
</dbReference>
<dbReference type="PANTHER" id="PTHR11410:SF0">
    <property type="entry name" value="ATP SYNTHASE SUBUNIT A"/>
    <property type="match status" value="1"/>
</dbReference>
<dbReference type="Pfam" id="PF00119">
    <property type="entry name" value="ATP-synt_A"/>
    <property type="match status" value="1"/>
</dbReference>
<dbReference type="PRINTS" id="PR00123">
    <property type="entry name" value="ATPASEA"/>
</dbReference>
<dbReference type="SUPFAM" id="SSF81336">
    <property type="entry name" value="F1F0 ATP synthase subunit A"/>
    <property type="match status" value="1"/>
</dbReference>
<dbReference type="PROSITE" id="PS00449">
    <property type="entry name" value="ATPASE_A"/>
    <property type="match status" value="1"/>
</dbReference>
<feature type="chain" id="PRO_0000362290" description="ATP synthase subunit a">
    <location>
        <begin position="1"/>
        <end position="243"/>
    </location>
</feature>
<feature type="transmembrane region" description="Helical" evidence="1">
    <location>
        <begin position="29"/>
        <end position="49"/>
    </location>
</feature>
<feature type="transmembrane region" description="Helical" evidence="1">
    <location>
        <begin position="54"/>
        <end position="74"/>
    </location>
</feature>
<feature type="transmembrane region" description="Helical" evidence="1">
    <location>
        <begin position="89"/>
        <end position="109"/>
    </location>
</feature>
<feature type="transmembrane region" description="Helical" evidence="1">
    <location>
        <begin position="114"/>
        <end position="134"/>
    </location>
</feature>
<feature type="transmembrane region" description="Helical" evidence="1">
    <location>
        <begin position="144"/>
        <end position="164"/>
    </location>
</feature>
<feature type="transmembrane region" description="Helical" evidence="1">
    <location>
        <begin position="182"/>
        <end position="202"/>
    </location>
</feature>
<feature type="transmembrane region" description="Helical" evidence="1">
    <location>
        <begin position="208"/>
        <end position="228"/>
    </location>
</feature>
<gene>
    <name evidence="1" type="primary">atpB</name>
    <name type="ordered locus">ECH_1086</name>
</gene>